<gene>
    <name evidence="2" type="ordered locus">YMR008C-A</name>
</gene>
<keyword id="KW-1185">Reference proteome</keyword>
<sequence length="155" mass="17365">MYDLLEQKFFVREIKFASAYYLRTGKALNNSKTPIFQRKHSLPAWLSSAVIITAPVSNDGSHSILFARKTLRMIMPMFSPLFNRSPDDCPSHLTATHIFQQFSAMLDYGQSTKEATNKRRLIKGSDLLVALDRNCIPSAPFVPEIALRKSGAVGS</sequence>
<protein>
    <recommendedName>
        <fullName evidence="1">Uncharacterized protein YMR008C-A</fullName>
    </recommendedName>
</protein>
<name>YM008_YEAST</name>
<accession>A0A8D9PCQ4</accession>
<dbReference type="EMBL" id="BK006946">
    <property type="protein sequence ID" value="DAD54810.1"/>
    <property type="molecule type" value="Genomic_DNA"/>
</dbReference>
<dbReference type="RefSeq" id="NP_001381969.1">
    <property type="nucleotide sequence ID" value="NM_001395039.1"/>
</dbReference>
<dbReference type="GeneID" id="65052913"/>
<dbReference type="SGD" id="S000303813">
    <property type="gene designation" value="YMR008C-A"/>
</dbReference>
<dbReference type="InParanoid" id="A0A8D9PCQ4"/>
<dbReference type="OrthoDB" id="4039026at2759"/>
<dbReference type="PRO" id="PR:A0A8D9PCQ4"/>
<dbReference type="Proteomes" id="UP000002311">
    <property type="component" value="Chromosome XIII"/>
</dbReference>
<reference key="1">
    <citation type="journal article" date="1997" name="Nature">
        <title>The nucleotide sequence of Saccharomyces cerevisiae chromosome XIII.</title>
        <authorList>
            <person name="Bowman S."/>
            <person name="Churcher C.M."/>
            <person name="Badcock K."/>
            <person name="Brown D."/>
            <person name="Chillingworth T."/>
            <person name="Connor R."/>
            <person name="Dedman K."/>
            <person name="Devlin K."/>
            <person name="Gentles S."/>
            <person name="Hamlin N."/>
            <person name="Hunt S."/>
            <person name="Jagels K."/>
            <person name="Lye G."/>
            <person name="Moule S."/>
            <person name="Odell C."/>
            <person name="Pearson D."/>
            <person name="Rajandream M.A."/>
            <person name="Rice P."/>
            <person name="Skelton J."/>
            <person name="Walsh S.V."/>
            <person name="Whitehead S."/>
            <person name="Barrell B.G."/>
        </authorList>
    </citation>
    <scope>NUCLEOTIDE SEQUENCE [LARGE SCALE GENOMIC DNA]</scope>
    <source>
        <strain>ATCC 204508 / S288c</strain>
    </source>
</reference>
<reference key="2">
    <citation type="journal article" date="2014" name="G3 (Bethesda)">
        <title>The reference genome sequence of Saccharomyces cerevisiae: Then and now.</title>
        <authorList>
            <person name="Engel S.R."/>
            <person name="Dietrich F.S."/>
            <person name="Fisk D.G."/>
            <person name="Binkley G."/>
            <person name="Balakrishnan R."/>
            <person name="Costanzo M.C."/>
            <person name="Dwight S.S."/>
            <person name="Hitz B.C."/>
            <person name="Karra K."/>
            <person name="Nash R.S."/>
            <person name="Weng S."/>
            <person name="Wong E.D."/>
            <person name="Lloyd P."/>
            <person name="Skrzypek M.S."/>
            <person name="Miyasato S.R."/>
            <person name="Simison M."/>
            <person name="Cherry J.M."/>
        </authorList>
    </citation>
    <scope>GENOME REANNOTATION</scope>
    <source>
        <strain>ATCC 204508 / S288c</strain>
    </source>
</reference>
<reference key="3">
    <citation type="journal article" date="2015" name="PLoS ONE">
        <title>AGAPE (Automated Genome Analysis PipelinE) for pan-genome analysis of Saccharomyces cerevisiae.</title>
        <authorList>
            <person name="Song G."/>
            <person name="Dickins B.J."/>
            <person name="Demeter J."/>
            <person name="Engel S."/>
            <person name="Gallagher J."/>
            <person name="Choe K."/>
            <person name="Dunn B."/>
            <person name="Snyder M."/>
            <person name="Cherry J.M."/>
        </authorList>
    </citation>
    <scope>IDENTIFICATION</scope>
</reference>
<evidence type="ECO:0000305" key="1"/>
<evidence type="ECO:0000312" key="2">
    <source>
        <dbReference type="SGD" id="S000303813"/>
    </source>
</evidence>
<feature type="chain" id="PRO_0000455991" description="Uncharacterized protein YMR008C-A">
    <location>
        <begin position="1"/>
        <end position="155"/>
    </location>
</feature>
<organism>
    <name type="scientific">Saccharomyces cerevisiae (strain ATCC 204508 / S288c)</name>
    <name type="common">Baker's yeast</name>
    <dbReference type="NCBI Taxonomy" id="559292"/>
    <lineage>
        <taxon>Eukaryota</taxon>
        <taxon>Fungi</taxon>
        <taxon>Dikarya</taxon>
        <taxon>Ascomycota</taxon>
        <taxon>Saccharomycotina</taxon>
        <taxon>Saccharomycetes</taxon>
        <taxon>Saccharomycetales</taxon>
        <taxon>Saccharomycetaceae</taxon>
        <taxon>Saccharomyces</taxon>
    </lineage>
</organism>
<proteinExistence type="predicted"/>